<dbReference type="EC" id="2.4.1.18"/>
<dbReference type="EMBL" id="BA000022">
    <property type="protein sequence ID" value="BAA10073.1"/>
    <property type="molecule type" value="Genomic_DNA"/>
</dbReference>
<dbReference type="PIR" id="S76095">
    <property type="entry name" value="S76095"/>
</dbReference>
<dbReference type="SMR" id="P52981"/>
<dbReference type="FunCoup" id="P52981">
    <property type="interactions" value="336"/>
</dbReference>
<dbReference type="IntAct" id="P52981">
    <property type="interactions" value="1"/>
</dbReference>
<dbReference type="STRING" id="1148.gene:10499565"/>
<dbReference type="CAZy" id="CBM48">
    <property type="family name" value="Carbohydrate-Binding Module Family 48"/>
</dbReference>
<dbReference type="CAZy" id="GH13">
    <property type="family name" value="Glycoside Hydrolase Family 13"/>
</dbReference>
<dbReference type="PaxDb" id="1148-1001448"/>
<dbReference type="EnsemblBacteria" id="BAA10073">
    <property type="protein sequence ID" value="BAA10073"/>
    <property type="gene ID" value="BAA10073"/>
</dbReference>
<dbReference type="KEGG" id="syn:sll0158"/>
<dbReference type="eggNOG" id="COG0296">
    <property type="taxonomic scope" value="Bacteria"/>
</dbReference>
<dbReference type="InParanoid" id="P52981"/>
<dbReference type="PhylomeDB" id="P52981"/>
<dbReference type="UniPathway" id="UPA00164"/>
<dbReference type="Proteomes" id="UP000001425">
    <property type="component" value="Chromosome"/>
</dbReference>
<dbReference type="GO" id="GO:0003844">
    <property type="term" value="F:1,4-alpha-glucan branching enzyme activity"/>
    <property type="evidence" value="ECO:0007669"/>
    <property type="project" value="UniProtKB-UniRule"/>
</dbReference>
<dbReference type="GO" id="GO:0043169">
    <property type="term" value="F:cation binding"/>
    <property type="evidence" value="ECO:0007669"/>
    <property type="project" value="InterPro"/>
</dbReference>
<dbReference type="GO" id="GO:0004553">
    <property type="term" value="F:hydrolase activity, hydrolyzing O-glycosyl compounds"/>
    <property type="evidence" value="ECO:0007669"/>
    <property type="project" value="InterPro"/>
</dbReference>
<dbReference type="GO" id="GO:0005978">
    <property type="term" value="P:glycogen biosynthetic process"/>
    <property type="evidence" value="ECO:0007669"/>
    <property type="project" value="UniProtKB-UniRule"/>
</dbReference>
<dbReference type="CDD" id="cd11322">
    <property type="entry name" value="AmyAc_Glg_BE"/>
    <property type="match status" value="1"/>
</dbReference>
<dbReference type="CDD" id="cd02855">
    <property type="entry name" value="E_set_GBE_prok_N"/>
    <property type="match status" value="1"/>
</dbReference>
<dbReference type="FunFam" id="2.60.40.10:FF:000169">
    <property type="entry name" value="1,4-alpha-glucan branching enzyme GlgB"/>
    <property type="match status" value="1"/>
</dbReference>
<dbReference type="FunFam" id="2.60.40.1180:FF:000002">
    <property type="entry name" value="1,4-alpha-glucan branching enzyme GlgB"/>
    <property type="match status" value="1"/>
</dbReference>
<dbReference type="FunFam" id="3.20.20.80:FF:000003">
    <property type="entry name" value="1,4-alpha-glucan branching enzyme GlgB"/>
    <property type="match status" value="1"/>
</dbReference>
<dbReference type="Gene3D" id="3.20.20.80">
    <property type="entry name" value="Glycosidases"/>
    <property type="match status" value="1"/>
</dbReference>
<dbReference type="Gene3D" id="2.60.40.1180">
    <property type="entry name" value="Golgi alpha-mannosidase II"/>
    <property type="match status" value="1"/>
</dbReference>
<dbReference type="Gene3D" id="2.60.40.10">
    <property type="entry name" value="Immunoglobulins"/>
    <property type="match status" value="2"/>
</dbReference>
<dbReference type="HAMAP" id="MF_00685">
    <property type="entry name" value="GlgB"/>
    <property type="match status" value="1"/>
</dbReference>
<dbReference type="InterPro" id="IPR006048">
    <property type="entry name" value="A-amylase/branching_C"/>
</dbReference>
<dbReference type="InterPro" id="IPR037439">
    <property type="entry name" value="Branching_enzy"/>
</dbReference>
<dbReference type="InterPro" id="IPR006407">
    <property type="entry name" value="GlgB"/>
</dbReference>
<dbReference type="InterPro" id="IPR054169">
    <property type="entry name" value="GlgB_N"/>
</dbReference>
<dbReference type="InterPro" id="IPR044143">
    <property type="entry name" value="GlgB_N_E_set_prok"/>
</dbReference>
<dbReference type="InterPro" id="IPR006047">
    <property type="entry name" value="Glyco_hydro_13_cat_dom"/>
</dbReference>
<dbReference type="InterPro" id="IPR004193">
    <property type="entry name" value="Glyco_hydro_13_N"/>
</dbReference>
<dbReference type="InterPro" id="IPR013780">
    <property type="entry name" value="Glyco_hydro_b"/>
</dbReference>
<dbReference type="InterPro" id="IPR017853">
    <property type="entry name" value="Glycoside_hydrolase_SF"/>
</dbReference>
<dbReference type="InterPro" id="IPR013783">
    <property type="entry name" value="Ig-like_fold"/>
</dbReference>
<dbReference type="InterPro" id="IPR014756">
    <property type="entry name" value="Ig_E-set"/>
</dbReference>
<dbReference type="NCBIfam" id="TIGR01515">
    <property type="entry name" value="branching_enzym"/>
    <property type="match status" value="1"/>
</dbReference>
<dbReference type="NCBIfam" id="NF003811">
    <property type="entry name" value="PRK05402.1"/>
    <property type="match status" value="1"/>
</dbReference>
<dbReference type="NCBIfam" id="NF008967">
    <property type="entry name" value="PRK12313.1"/>
    <property type="match status" value="1"/>
</dbReference>
<dbReference type="PANTHER" id="PTHR43651">
    <property type="entry name" value="1,4-ALPHA-GLUCAN-BRANCHING ENZYME"/>
    <property type="match status" value="1"/>
</dbReference>
<dbReference type="PANTHER" id="PTHR43651:SF3">
    <property type="entry name" value="1,4-ALPHA-GLUCAN-BRANCHING ENZYME"/>
    <property type="match status" value="1"/>
</dbReference>
<dbReference type="Pfam" id="PF00128">
    <property type="entry name" value="Alpha-amylase"/>
    <property type="match status" value="2"/>
</dbReference>
<dbReference type="Pfam" id="PF02806">
    <property type="entry name" value="Alpha-amylase_C"/>
    <property type="match status" value="1"/>
</dbReference>
<dbReference type="Pfam" id="PF02922">
    <property type="entry name" value="CBM_48"/>
    <property type="match status" value="1"/>
</dbReference>
<dbReference type="Pfam" id="PF22019">
    <property type="entry name" value="GlgB_N"/>
    <property type="match status" value="1"/>
</dbReference>
<dbReference type="PIRSF" id="PIRSF000463">
    <property type="entry name" value="GlgB"/>
    <property type="match status" value="1"/>
</dbReference>
<dbReference type="SMART" id="SM00642">
    <property type="entry name" value="Aamy"/>
    <property type="match status" value="1"/>
</dbReference>
<dbReference type="SUPFAM" id="SSF51445">
    <property type="entry name" value="(Trans)glycosidases"/>
    <property type="match status" value="1"/>
</dbReference>
<dbReference type="SUPFAM" id="SSF81296">
    <property type="entry name" value="E set domains"/>
    <property type="match status" value="2"/>
</dbReference>
<dbReference type="SUPFAM" id="SSF51011">
    <property type="entry name" value="Glycosyl hydrolase domain"/>
    <property type="match status" value="1"/>
</dbReference>
<feature type="chain" id="PRO_0000188758" description="1,4-alpha-glucan branching enzyme GlgB">
    <location>
        <begin position="1"/>
        <end position="770"/>
    </location>
</feature>
<feature type="active site" description="Nucleophile" evidence="1">
    <location>
        <position position="433"/>
    </location>
</feature>
<feature type="active site" description="Proton donor" evidence="1">
    <location>
        <position position="486"/>
    </location>
</feature>
<name>GLGB_SYNY3</name>
<organism>
    <name type="scientific">Synechocystis sp. (strain ATCC 27184 / PCC 6803 / Kazusa)</name>
    <dbReference type="NCBI Taxonomy" id="1111708"/>
    <lineage>
        <taxon>Bacteria</taxon>
        <taxon>Bacillati</taxon>
        <taxon>Cyanobacteriota</taxon>
        <taxon>Cyanophyceae</taxon>
        <taxon>Synechococcales</taxon>
        <taxon>Merismopediaceae</taxon>
        <taxon>Synechocystis</taxon>
    </lineage>
</organism>
<protein>
    <recommendedName>
        <fullName>1,4-alpha-glucan branching enzyme GlgB</fullName>
        <ecNumber>2.4.1.18</ecNumber>
    </recommendedName>
    <alternativeName>
        <fullName>1,4-alpha-D-glucan:1,4-alpha-D-glucan 6-glucosyl-transferase</fullName>
    </alternativeName>
    <alternativeName>
        <fullName>Alpha-(1-&gt;4)-glucan branching enzyme</fullName>
    </alternativeName>
    <alternativeName>
        <fullName>Glycogen branching enzyme</fullName>
        <shortName>BE</shortName>
    </alternativeName>
</protein>
<evidence type="ECO:0000250" key="1"/>
<evidence type="ECO:0000305" key="2"/>
<sequence>MTYTINADQVHQIVHNLHHDPFEVLGCHPLGDHGKVNQWVIRAYLPTAEAVTVLLPTDRREVIMTTVHHPNFFECVLELEEPKNYQLRITENGHERVIYDPYGFKTPKLTDFDLHVFGEGNHHRIYEKLGAHLMTVDGVKGVYFAVWAPNARNVSILGDFNNWDGRLHQMRKRNNMVWELFIPELGVGTSYKYEIKNWEGHIYEKTDPYGFYQEVRPKTASIVADLDGYQWHDEDWLEARRTSDPLSKPVSVYELHLGSWLHTAYDEPVKTLHGEGVPVEVSEWNTGARFLTYYELVDKLIPYVKELGYTHIELLPIAEHPFDGSWGYQVTGYYAPTSRFGSPEDFMYFVDQCHLNGIGVIIDWVPGHFPKDGHGLAFFDGTHLYEHGDPRKGEHKEWGTLIFNYGRNEVRNFLVANALFWFDKYHIDGMRVDAVASMLYLDYCREEGEWVANEYGGRENLEAADFLRQVNSVVYSYFPGILSIAEESTSWPMVSWPTYVGGLGFNLKWNMGWMHDMLDYFSMDPWFRQFHQNSITFSMWYNHSENYMLALSHDEVVHGKSNMLGKMPGDEWQKYANVRALFTYMFTHPGKKTMFMSMEFGQWSEWNVWGDLEWHLLNFPPHQQLKQFFTELNHLYKNEPALYSNDFDESGFQWIDCSDNRHSVVSFIRRAKNSAEFVVTICNFTPQPHSHYRVGVPVPGFYTELFNSDARQYGGSNMGNLGGKWTEEWSFHEQPYSLDLCLPPLSVLVLKLSQNAEENTVPAEEASNIA</sequence>
<reference key="1">
    <citation type="journal article" date="1995" name="DNA Res.">
        <title>Sequence analysis of the genome of the unicellular cyanobacterium Synechocystis sp. strain PCC6803. I. Sequence features in the 1 Mb region from map positions 64% to 92% of the genome.</title>
        <authorList>
            <person name="Kaneko T."/>
            <person name="Tanaka A."/>
            <person name="Sato S."/>
            <person name="Kotani H."/>
            <person name="Sazuka T."/>
            <person name="Miyajima N."/>
            <person name="Sugiura M."/>
            <person name="Tabata S."/>
        </authorList>
    </citation>
    <scope>NUCLEOTIDE SEQUENCE [LARGE SCALE GENOMIC DNA]</scope>
    <source>
        <strain>ATCC 27184 / PCC 6803 / N-1</strain>
    </source>
</reference>
<reference key="2">
    <citation type="journal article" date="1996" name="DNA Res.">
        <title>Sequence analysis of the genome of the unicellular cyanobacterium Synechocystis sp. strain PCC6803. II. Sequence determination of the entire genome and assignment of potential protein-coding regions.</title>
        <authorList>
            <person name="Kaneko T."/>
            <person name="Sato S."/>
            <person name="Kotani H."/>
            <person name="Tanaka A."/>
            <person name="Asamizu E."/>
            <person name="Nakamura Y."/>
            <person name="Miyajima N."/>
            <person name="Hirosawa M."/>
            <person name="Sugiura M."/>
            <person name="Sasamoto S."/>
            <person name="Kimura T."/>
            <person name="Hosouchi T."/>
            <person name="Matsuno A."/>
            <person name="Muraki A."/>
            <person name="Nakazaki N."/>
            <person name="Naruo K."/>
            <person name="Okumura S."/>
            <person name="Shimpo S."/>
            <person name="Takeuchi C."/>
            <person name="Wada T."/>
            <person name="Watanabe A."/>
            <person name="Yamada M."/>
            <person name="Yasuda M."/>
            <person name="Tabata S."/>
        </authorList>
    </citation>
    <scope>NUCLEOTIDE SEQUENCE [LARGE SCALE GENOMIC DNA]</scope>
    <source>
        <strain>ATCC 27184 / PCC 6803 / Kazusa</strain>
    </source>
</reference>
<comment type="function">
    <text evidence="1">Catalyzes the formation of the alpha-1,6-glucosidic linkages in glycogen by scission of a 1,4-alpha-linked oligosaccharide from growing alpha-1,4-glucan chains and the subsequent attachment of the oligosaccharide to the alpha-1,6 position.</text>
</comment>
<comment type="catalytic activity">
    <reaction>
        <text>Transfers a segment of a (1-&gt;4)-alpha-D-glucan chain to a primary hydroxy group in a similar glucan chain.</text>
        <dbReference type="EC" id="2.4.1.18"/>
    </reaction>
</comment>
<comment type="pathway">
    <text>Glycan biosynthesis; glycogen biosynthesis.</text>
</comment>
<comment type="subunit">
    <text evidence="1">Monomer.</text>
</comment>
<comment type="similarity">
    <text evidence="2">Belongs to the glycosyl hydrolase 13 family. GlgB subfamily.</text>
</comment>
<gene>
    <name type="primary">glgB</name>
    <name type="ordered locus">sll0158</name>
</gene>
<accession>P52981</accession>
<keyword id="KW-0119">Carbohydrate metabolism</keyword>
<keyword id="KW-0320">Glycogen biosynthesis</keyword>
<keyword id="KW-0321">Glycogen metabolism</keyword>
<keyword id="KW-0328">Glycosyltransferase</keyword>
<keyword id="KW-1185">Reference proteome</keyword>
<keyword id="KW-0808">Transferase</keyword>
<proteinExistence type="inferred from homology"/>